<organismHost>
    <name type="scientific">Rhinolophus sinicus</name>
    <name type="common">Chinese rufous horseshoe bat</name>
    <dbReference type="NCBI Taxonomy" id="89399"/>
</organismHost>
<sequence>MDPKVNVVPPALHLVDPQIQMTITRMEDAVVHDQNNAGPKVYPIILRLGSQLSLSMAKRNLDSLEARAFQSTPIVVKMTKLATTEELPDEFVVVTAK</sequence>
<reference key="1">
    <citation type="journal article" date="2005" name="Proc. Natl. Acad. Sci. U.S.A.">
        <title>Severe acute respiratory syndrome coronavirus-like virus in Chinese horseshoe bats.</title>
        <authorList>
            <person name="Lau S.K.P."/>
            <person name="Woo P.C.Y."/>
            <person name="Li K.S.M."/>
            <person name="Huang Y."/>
            <person name="Tsoi H.-W."/>
            <person name="Wong B.H.L."/>
            <person name="Wong S.S.Y."/>
            <person name="Leung S.-Y."/>
            <person name="Chan K.-H."/>
            <person name="Yuen K.-Y."/>
        </authorList>
    </citation>
    <scope>NUCLEOTIDE SEQUENCE [GENOMIC RNA]</scope>
    <source>
        <strain>Isolate HKU3-1</strain>
    </source>
</reference>
<dbReference type="EMBL" id="DQ022305">
    <property type="protein sequence ID" value="AAY88875.1"/>
    <property type="molecule type" value="Genomic_RNA"/>
</dbReference>
<dbReference type="SMR" id="Q3LZX3"/>
<dbReference type="Proteomes" id="UP000007450">
    <property type="component" value="Segment"/>
</dbReference>
<dbReference type="GO" id="GO:0044162">
    <property type="term" value="C:host cell cytoplasmic vesicle membrane"/>
    <property type="evidence" value="ECO:0007669"/>
    <property type="project" value="UniProtKB-SubCell"/>
</dbReference>
<dbReference type="GO" id="GO:0016020">
    <property type="term" value="C:membrane"/>
    <property type="evidence" value="ECO:0007669"/>
    <property type="project" value="UniProtKB-KW"/>
</dbReference>
<dbReference type="CDD" id="cd21955">
    <property type="entry name" value="SARS-CoV_ORF9b"/>
    <property type="match status" value="1"/>
</dbReference>
<dbReference type="InterPro" id="IPR018542">
    <property type="entry name" value="Protein_9b_Betacoronavirus"/>
</dbReference>
<dbReference type="InterPro" id="IPR037223">
    <property type="entry name" value="Protein_9b_SARS"/>
</dbReference>
<dbReference type="Pfam" id="PF09399">
    <property type="entry name" value="bCoV_lipid_BD"/>
    <property type="match status" value="1"/>
</dbReference>
<dbReference type="SUPFAM" id="SSF141666">
    <property type="entry name" value="SARS ORF9b-like"/>
    <property type="match status" value="1"/>
</dbReference>
<dbReference type="PROSITE" id="PS51920">
    <property type="entry name" value="SARS_9B"/>
    <property type="match status" value="1"/>
</dbReference>
<keyword id="KW-1035">Host cytoplasm</keyword>
<keyword id="KW-1036">Host cytoplasmic vesicle</keyword>
<keyword id="KW-1043">Host membrane</keyword>
<keyword id="KW-0472">Membrane</keyword>
<evidence type="ECO:0000250" key="1"/>
<evidence type="ECO:0000255" key="2">
    <source>
        <dbReference type="PROSITE-ProRule" id="PRU01268"/>
    </source>
</evidence>
<evidence type="ECO:0000305" key="3"/>
<feature type="chain" id="PRO_0000291325" description="Protein 9b">
    <location>
        <begin position="1"/>
        <end position="97"/>
    </location>
</feature>
<feature type="domain" description="9b" evidence="2">
    <location>
        <begin position="8"/>
        <end position="97"/>
    </location>
</feature>
<protein>
    <recommendedName>
        <fullName>Protein 9b</fullName>
    </recommendedName>
    <alternativeName>
        <fullName>Accessory protein 9b</fullName>
    </alternativeName>
    <alternativeName>
        <fullName>ORF-9b</fullName>
    </alternativeName>
</protein>
<gene>
    <name type="ORF">9b</name>
</gene>
<name>ORF9B_BCHK3</name>
<proteinExistence type="inferred from homology"/>
<accession>Q3LZX3</accession>
<organism>
    <name type="scientific">Bat coronavirus HKU3</name>
    <name type="common">BtCoV</name>
    <name type="synonym">SARS-like coronavirus HKU3</name>
    <dbReference type="NCBI Taxonomy" id="442736"/>
    <lineage>
        <taxon>Viruses</taxon>
        <taxon>Riboviria</taxon>
        <taxon>Orthornavirae</taxon>
        <taxon>Pisuviricota</taxon>
        <taxon>Pisoniviricetes</taxon>
        <taxon>Nidovirales</taxon>
        <taxon>Cornidovirineae</taxon>
        <taxon>Coronaviridae</taxon>
        <taxon>Orthocoronavirinae</taxon>
        <taxon>Betacoronavirus</taxon>
        <taxon>Sarbecovirus</taxon>
        <taxon>Severe acute respiratory syndrome coronavirus</taxon>
    </lineage>
</organism>
<comment type="subunit">
    <text evidence="1">Homodimer.</text>
</comment>
<comment type="subcellular location">
    <subcellularLocation>
        <location>Host cytoplasmic vesicle membrane</location>
        <topology>Peripheral membrane protein</topology>
    </subcellularLocation>
    <subcellularLocation>
        <location>Host cytoplasm</location>
    </subcellularLocation>
    <text evidence="1">Binds non-covalently to intracellular lipid bilayers.</text>
</comment>
<comment type="miscellaneous">
    <text>The gene encoding this protein is included within the N gene (alternative ORF).</text>
</comment>
<comment type="miscellaneous">
    <text>Bat coronavirus HKU3 is highly similar to SARS-CoV (SARS-like).</text>
</comment>
<comment type="similarity">
    <text evidence="3">Belongs to the coronavirus group 2 protein 9b family.</text>
</comment>